<feature type="chain" id="PRO_1000198200" description="Endonuclease NucS">
    <location>
        <begin position="1"/>
        <end position="231"/>
    </location>
</feature>
<name>NUCS_KOCRD</name>
<dbReference type="EC" id="3.1.-.-" evidence="1"/>
<dbReference type="EMBL" id="AP009152">
    <property type="protein sequence ID" value="BAG29335.1"/>
    <property type="molecule type" value="Genomic_DNA"/>
</dbReference>
<dbReference type="RefSeq" id="WP_012398056.1">
    <property type="nucleotide sequence ID" value="NZ_VECX01000011.1"/>
</dbReference>
<dbReference type="SMR" id="B2GLZ4"/>
<dbReference type="STRING" id="378753.KRH_09880"/>
<dbReference type="KEGG" id="krh:KRH_09880"/>
<dbReference type="eggNOG" id="COG1637">
    <property type="taxonomic scope" value="Bacteria"/>
</dbReference>
<dbReference type="HOGENOM" id="CLU_069350_0_0_11"/>
<dbReference type="OrthoDB" id="3344925at2"/>
<dbReference type="Proteomes" id="UP000008838">
    <property type="component" value="Chromosome"/>
</dbReference>
<dbReference type="GO" id="GO:0005737">
    <property type="term" value="C:cytoplasm"/>
    <property type="evidence" value="ECO:0007669"/>
    <property type="project" value="UniProtKB-SubCell"/>
</dbReference>
<dbReference type="GO" id="GO:0003677">
    <property type="term" value="F:DNA binding"/>
    <property type="evidence" value="ECO:0007669"/>
    <property type="project" value="UniProtKB-KW"/>
</dbReference>
<dbReference type="GO" id="GO:0000014">
    <property type="term" value="F:single-stranded DNA endodeoxyribonuclease activity"/>
    <property type="evidence" value="ECO:0007669"/>
    <property type="project" value="UniProtKB-UniRule"/>
</dbReference>
<dbReference type="CDD" id="cd22341">
    <property type="entry name" value="NucS-like"/>
    <property type="match status" value="1"/>
</dbReference>
<dbReference type="Gene3D" id="2.70.180.20">
    <property type="match status" value="1"/>
</dbReference>
<dbReference type="Gene3D" id="3.40.1350.10">
    <property type="match status" value="1"/>
</dbReference>
<dbReference type="HAMAP" id="MF_00722">
    <property type="entry name" value="NucS"/>
    <property type="match status" value="1"/>
</dbReference>
<dbReference type="InterPro" id="IPR002793">
    <property type="entry name" value="Endonuclease_NucS"/>
</dbReference>
<dbReference type="InterPro" id="IPR048301">
    <property type="entry name" value="NucS_C"/>
</dbReference>
<dbReference type="InterPro" id="IPR048302">
    <property type="entry name" value="NucS_N"/>
</dbReference>
<dbReference type="InterPro" id="IPR049173">
    <property type="entry name" value="NucS_N_sf"/>
</dbReference>
<dbReference type="InterPro" id="IPR011856">
    <property type="entry name" value="tRNA_endonuc-like_dom_sf"/>
</dbReference>
<dbReference type="NCBIfam" id="NF002876">
    <property type="entry name" value="PRK03298.1"/>
    <property type="match status" value="1"/>
</dbReference>
<dbReference type="PANTHER" id="PTHR38814">
    <property type="entry name" value="ENDONUCLEASE NUCS"/>
    <property type="match status" value="1"/>
</dbReference>
<dbReference type="PANTHER" id="PTHR38814:SF1">
    <property type="entry name" value="ENDONUCLEASE NUCS"/>
    <property type="match status" value="1"/>
</dbReference>
<dbReference type="Pfam" id="PF01939">
    <property type="entry name" value="NucS_C"/>
    <property type="match status" value="1"/>
</dbReference>
<dbReference type="Pfam" id="PF21003">
    <property type="entry name" value="NucS_N"/>
    <property type="match status" value="1"/>
</dbReference>
<protein>
    <recommendedName>
        <fullName evidence="1">Endonuclease NucS</fullName>
        <ecNumber evidence="1">3.1.-.-</ecNumber>
    </recommendedName>
</protein>
<evidence type="ECO:0000255" key="1">
    <source>
        <dbReference type="HAMAP-Rule" id="MF_00722"/>
    </source>
</evidence>
<accession>B2GLZ4</accession>
<proteinExistence type="inferred from homology"/>
<sequence>MRLVIADCSVRYEGRLNAHLPLARRLIMLKADGSVLIHSDGGSYKPLNWMSPPATLRVREPSEELLADGVKEVWEVQAGKSDDRLVIHIMTVHSRLEHELGADPGLIKDGVEADLQRLLAEQITLLGEGFSLVRREYPTTIGPVDILARDANGATVAVELKRRGDIDGVEQLTRYLELLNRDPLLRPVRGVFAAQQIKPQARTLARDRGIECLSLDYDEMRGNVDTQSRLF</sequence>
<comment type="function">
    <text evidence="1">Cleaves both 3' and 5' ssDNA extremities of branched DNA structures.</text>
</comment>
<comment type="subcellular location">
    <subcellularLocation>
        <location evidence="1">Cytoplasm</location>
    </subcellularLocation>
</comment>
<comment type="similarity">
    <text evidence="1">Belongs to the NucS endonuclease family.</text>
</comment>
<keyword id="KW-0963">Cytoplasm</keyword>
<keyword id="KW-0238">DNA-binding</keyword>
<keyword id="KW-0255">Endonuclease</keyword>
<keyword id="KW-0378">Hydrolase</keyword>
<keyword id="KW-0540">Nuclease</keyword>
<keyword id="KW-1185">Reference proteome</keyword>
<gene>
    <name evidence="1" type="primary">nucS</name>
    <name type="ordered locus">KRH_09880</name>
</gene>
<reference key="1">
    <citation type="journal article" date="2008" name="J. Bacteriol.">
        <title>Complete genome sequence of the soil actinomycete Kocuria rhizophila.</title>
        <authorList>
            <person name="Takarada H."/>
            <person name="Sekine M."/>
            <person name="Kosugi H."/>
            <person name="Matsuo Y."/>
            <person name="Fujisawa T."/>
            <person name="Omata S."/>
            <person name="Kishi E."/>
            <person name="Shimizu A."/>
            <person name="Tsukatani N."/>
            <person name="Tanikawa S."/>
            <person name="Fujita N."/>
            <person name="Harayama S."/>
        </authorList>
    </citation>
    <scope>NUCLEOTIDE SEQUENCE [LARGE SCALE GENOMIC DNA]</scope>
    <source>
        <strain>ATCC 9341 / DSM 348 / NBRC 103217 / DC2201</strain>
    </source>
</reference>
<organism>
    <name type="scientific">Kocuria rhizophila (strain ATCC 9341 / DSM 348 / NBRC 103217 / DC2201)</name>
    <dbReference type="NCBI Taxonomy" id="378753"/>
    <lineage>
        <taxon>Bacteria</taxon>
        <taxon>Bacillati</taxon>
        <taxon>Actinomycetota</taxon>
        <taxon>Actinomycetes</taxon>
        <taxon>Micrococcales</taxon>
        <taxon>Micrococcaceae</taxon>
        <taxon>Kocuria</taxon>
    </lineage>
</organism>